<accession>O04090</accession>
<accession>Q93Z60</accession>
<gene>
    <name type="primary">FD1</name>
    <name type="synonym">PETF2</name>
    <name type="ordered locus">At1g10960</name>
    <name type="ORF">T19D16.12</name>
</gene>
<keyword id="KW-0001">2Fe-2S</keyword>
<keyword id="KW-0150">Chloroplast</keyword>
<keyword id="KW-0249">Electron transport</keyword>
<keyword id="KW-0408">Iron</keyword>
<keyword id="KW-0411">Iron-sulfur</keyword>
<keyword id="KW-0479">Metal-binding</keyword>
<keyword id="KW-0934">Plastid</keyword>
<keyword id="KW-1185">Reference proteome</keyword>
<keyword id="KW-0809">Transit peptide</keyword>
<keyword id="KW-0813">Transport</keyword>
<feature type="transit peptide" description="Chloroplast">
    <location>
        <begin position="1"/>
        <end position="52"/>
    </location>
</feature>
<feature type="chain" id="PRO_0000008826" description="Ferredoxin-1, chloroplastic">
    <location>
        <begin position="53"/>
        <end position="148"/>
    </location>
</feature>
<feature type="domain" description="2Fe-2S ferredoxin-type" evidence="1">
    <location>
        <begin position="55"/>
        <end position="145"/>
    </location>
</feature>
<feature type="binding site" evidence="1">
    <location>
        <position position="91"/>
    </location>
    <ligand>
        <name>[2Fe-2S] cluster</name>
        <dbReference type="ChEBI" id="CHEBI:190135"/>
    </ligand>
</feature>
<feature type="binding site" evidence="1">
    <location>
        <position position="96"/>
    </location>
    <ligand>
        <name>[2Fe-2S] cluster</name>
        <dbReference type="ChEBI" id="CHEBI:190135"/>
    </ligand>
</feature>
<feature type="binding site" evidence="1">
    <location>
        <position position="99"/>
    </location>
    <ligand>
        <name>[2Fe-2S] cluster</name>
        <dbReference type="ChEBI" id="CHEBI:190135"/>
    </ligand>
</feature>
<feature type="binding site" evidence="1">
    <location>
        <position position="129"/>
    </location>
    <ligand>
        <name>[2Fe-2S] cluster</name>
        <dbReference type="ChEBI" id="CHEBI:190135"/>
    </ligand>
</feature>
<evidence type="ECO:0000255" key="1">
    <source>
        <dbReference type="PROSITE-ProRule" id="PRU00465"/>
    </source>
</evidence>
<evidence type="ECO:0000269" key="2">
    <source>
    </source>
</evidence>
<evidence type="ECO:0000305" key="3"/>
<reference key="1">
    <citation type="journal article" date="2000" name="Nature">
        <title>Sequence and analysis of chromosome 1 of the plant Arabidopsis thaliana.</title>
        <authorList>
            <person name="Theologis A."/>
            <person name="Ecker J.R."/>
            <person name="Palm C.J."/>
            <person name="Federspiel N.A."/>
            <person name="Kaul S."/>
            <person name="White O."/>
            <person name="Alonso J."/>
            <person name="Altafi H."/>
            <person name="Araujo R."/>
            <person name="Bowman C.L."/>
            <person name="Brooks S.Y."/>
            <person name="Buehler E."/>
            <person name="Chan A."/>
            <person name="Chao Q."/>
            <person name="Chen H."/>
            <person name="Cheuk R.F."/>
            <person name="Chin C.W."/>
            <person name="Chung M.K."/>
            <person name="Conn L."/>
            <person name="Conway A.B."/>
            <person name="Conway A.R."/>
            <person name="Creasy T.H."/>
            <person name="Dewar K."/>
            <person name="Dunn P."/>
            <person name="Etgu P."/>
            <person name="Feldblyum T.V."/>
            <person name="Feng J.-D."/>
            <person name="Fong B."/>
            <person name="Fujii C.Y."/>
            <person name="Gill J.E."/>
            <person name="Goldsmith A.D."/>
            <person name="Haas B."/>
            <person name="Hansen N.F."/>
            <person name="Hughes B."/>
            <person name="Huizar L."/>
            <person name="Hunter J.L."/>
            <person name="Jenkins J."/>
            <person name="Johnson-Hopson C."/>
            <person name="Khan S."/>
            <person name="Khaykin E."/>
            <person name="Kim C.J."/>
            <person name="Koo H.L."/>
            <person name="Kremenetskaia I."/>
            <person name="Kurtz D.B."/>
            <person name="Kwan A."/>
            <person name="Lam B."/>
            <person name="Langin-Hooper S."/>
            <person name="Lee A."/>
            <person name="Lee J.M."/>
            <person name="Lenz C.A."/>
            <person name="Li J.H."/>
            <person name="Li Y.-P."/>
            <person name="Lin X."/>
            <person name="Liu S.X."/>
            <person name="Liu Z.A."/>
            <person name="Luros J.S."/>
            <person name="Maiti R."/>
            <person name="Marziali A."/>
            <person name="Militscher J."/>
            <person name="Miranda M."/>
            <person name="Nguyen M."/>
            <person name="Nierman W.C."/>
            <person name="Osborne B.I."/>
            <person name="Pai G."/>
            <person name="Peterson J."/>
            <person name="Pham P.K."/>
            <person name="Rizzo M."/>
            <person name="Rooney T."/>
            <person name="Rowley D."/>
            <person name="Sakano H."/>
            <person name="Salzberg S.L."/>
            <person name="Schwartz J.R."/>
            <person name="Shinn P."/>
            <person name="Southwick A.M."/>
            <person name="Sun H."/>
            <person name="Tallon L.J."/>
            <person name="Tambunga G."/>
            <person name="Toriumi M.J."/>
            <person name="Town C.D."/>
            <person name="Utterback T."/>
            <person name="Van Aken S."/>
            <person name="Vaysberg M."/>
            <person name="Vysotskaia V.S."/>
            <person name="Walker M."/>
            <person name="Wu D."/>
            <person name="Yu G."/>
            <person name="Fraser C.M."/>
            <person name="Venter J.C."/>
            <person name="Davis R.W."/>
        </authorList>
    </citation>
    <scope>NUCLEOTIDE SEQUENCE [LARGE SCALE GENOMIC DNA]</scope>
    <source>
        <strain>cv. Columbia</strain>
    </source>
</reference>
<reference key="2">
    <citation type="journal article" date="2017" name="Plant J.">
        <title>Araport11: a complete reannotation of the Arabidopsis thaliana reference genome.</title>
        <authorList>
            <person name="Cheng C.Y."/>
            <person name="Krishnakumar V."/>
            <person name="Chan A.P."/>
            <person name="Thibaud-Nissen F."/>
            <person name="Schobel S."/>
            <person name="Town C.D."/>
        </authorList>
    </citation>
    <scope>GENOME REANNOTATION</scope>
    <source>
        <strain>cv. Columbia</strain>
    </source>
</reference>
<reference key="3">
    <citation type="journal article" date="2003" name="Science">
        <title>Empirical analysis of transcriptional activity in the Arabidopsis genome.</title>
        <authorList>
            <person name="Yamada K."/>
            <person name="Lim J."/>
            <person name="Dale J.M."/>
            <person name="Chen H."/>
            <person name="Shinn P."/>
            <person name="Palm C.J."/>
            <person name="Southwick A.M."/>
            <person name="Wu H.C."/>
            <person name="Kim C.J."/>
            <person name="Nguyen M."/>
            <person name="Pham P.K."/>
            <person name="Cheuk R.F."/>
            <person name="Karlin-Newmann G."/>
            <person name="Liu S.X."/>
            <person name="Lam B."/>
            <person name="Sakano H."/>
            <person name="Wu T."/>
            <person name="Yu G."/>
            <person name="Miranda M."/>
            <person name="Quach H.L."/>
            <person name="Tripp M."/>
            <person name="Chang C.H."/>
            <person name="Lee J.M."/>
            <person name="Toriumi M.J."/>
            <person name="Chan M.M."/>
            <person name="Tang C.C."/>
            <person name="Onodera C.S."/>
            <person name="Deng J.M."/>
            <person name="Akiyama K."/>
            <person name="Ansari Y."/>
            <person name="Arakawa T."/>
            <person name="Banh J."/>
            <person name="Banno F."/>
            <person name="Bowser L."/>
            <person name="Brooks S.Y."/>
            <person name="Carninci P."/>
            <person name="Chao Q."/>
            <person name="Choy N."/>
            <person name="Enju A."/>
            <person name="Goldsmith A.D."/>
            <person name="Gurjal M."/>
            <person name="Hansen N.F."/>
            <person name="Hayashizaki Y."/>
            <person name="Johnson-Hopson C."/>
            <person name="Hsuan V.W."/>
            <person name="Iida K."/>
            <person name="Karnes M."/>
            <person name="Khan S."/>
            <person name="Koesema E."/>
            <person name="Ishida J."/>
            <person name="Jiang P.X."/>
            <person name="Jones T."/>
            <person name="Kawai J."/>
            <person name="Kamiya A."/>
            <person name="Meyers C."/>
            <person name="Nakajima M."/>
            <person name="Narusaka M."/>
            <person name="Seki M."/>
            <person name="Sakurai T."/>
            <person name="Satou M."/>
            <person name="Tamse R."/>
            <person name="Vaysberg M."/>
            <person name="Wallender E.K."/>
            <person name="Wong C."/>
            <person name="Yamamura Y."/>
            <person name="Yuan S."/>
            <person name="Shinozaki K."/>
            <person name="Davis R.W."/>
            <person name="Theologis A."/>
            <person name="Ecker J.R."/>
        </authorList>
    </citation>
    <scope>NUCLEOTIDE SEQUENCE [LARGE SCALE MRNA]</scope>
    <source>
        <strain>cv. Columbia</strain>
    </source>
</reference>
<reference key="4">
    <citation type="submission" date="2002-03" db="EMBL/GenBank/DDBJ databases">
        <title>Full-length cDNA from Arabidopsis thaliana.</title>
        <authorList>
            <person name="Brover V.V."/>
            <person name="Troukhan M.E."/>
            <person name="Alexandrov N.A."/>
            <person name="Lu Y.-P."/>
            <person name="Flavell R.B."/>
            <person name="Feldmann K.A."/>
        </authorList>
    </citation>
    <scope>NUCLEOTIDE SEQUENCE [LARGE SCALE MRNA]</scope>
</reference>
<reference key="5">
    <citation type="journal article" date="2004" name="Plant Physiol.">
        <title>A post genomic characterization of Arabidopsis ferredoxins.</title>
        <authorList>
            <person name="Hanke G.T."/>
            <person name="Kimata-Ariga Y."/>
            <person name="Taniguchi I."/>
            <person name="Hase T."/>
        </authorList>
    </citation>
    <scope>TISSUE SPECIFICITY</scope>
    <scope>BIOPHYSICOCHEMICAL PROPERTIES</scope>
    <scope>GENE FAMILY</scope>
    <scope>NOMENCLATURE</scope>
</reference>
<organism>
    <name type="scientific">Arabidopsis thaliana</name>
    <name type="common">Mouse-ear cress</name>
    <dbReference type="NCBI Taxonomy" id="3702"/>
    <lineage>
        <taxon>Eukaryota</taxon>
        <taxon>Viridiplantae</taxon>
        <taxon>Streptophyta</taxon>
        <taxon>Embryophyta</taxon>
        <taxon>Tracheophyta</taxon>
        <taxon>Spermatophyta</taxon>
        <taxon>Magnoliopsida</taxon>
        <taxon>eudicotyledons</taxon>
        <taxon>Gunneridae</taxon>
        <taxon>Pentapetalae</taxon>
        <taxon>rosids</taxon>
        <taxon>malvids</taxon>
        <taxon>Brassicales</taxon>
        <taxon>Brassicaceae</taxon>
        <taxon>Camelineae</taxon>
        <taxon>Arabidopsis</taxon>
    </lineage>
</organism>
<proteinExistence type="evidence at protein level"/>
<dbReference type="EMBL" id="U95973">
    <property type="protein sequence ID" value="AAB65481.1"/>
    <property type="molecule type" value="Genomic_DNA"/>
</dbReference>
<dbReference type="EMBL" id="CP002684">
    <property type="protein sequence ID" value="AEE28669.1"/>
    <property type="molecule type" value="Genomic_DNA"/>
</dbReference>
<dbReference type="EMBL" id="AY058106">
    <property type="protein sequence ID" value="AAL24214.1"/>
    <property type="status" value="ALT_SEQ"/>
    <property type="molecule type" value="mRNA"/>
</dbReference>
<dbReference type="EMBL" id="AY127948">
    <property type="protein sequence ID" value="AAM91047.1"/>
    <property type="molecule type" value="mRNA"/>
</dbReference>
<dbReference type="EMBL" id="AY086012">
    <property type="protein sequence ID" value="AAM63221.1"/>
    <property type="molecule type" value="mRNA"/>
</dbReference>
<dbReference type="PIR" id="E86243">
    <property type="entry name" value="E86243"/>
</dbReference>
<dbReference type="RefSeq" id="NP_172565.1">
    <property type="nucleotide sequence ID" value="NM_100971.3"/>
</dbReference>
<dbReference type="SMR" id="O04090"/>
<dbReference type="BioGRID" id="22879">
    <property type="interactions" value="2"/>
</dbReference>
<dbReference type="FunCoup" id="O04090">
    <property type="interactions" value="223"/>
</dbReference>
<dbReference type="IntAct" id="O04090">
    <property type="interactions" value="2"/>
</dbReference>
<dbReference type="STRING" id="3702.O04090"/>
<dbReference type="iPTMnet" id="O04090"/>
<dbReference type="PaxDb" id="3702-AT1G10960.1"/>
<dbReference type="ProteomicsDB" id="232079"/>
<dbReference type="EnsemblPlants" id="AT1G10960.1">
    <property type="protein sequence ID" value="AT1G10960.1"/>
    <property type="gene ID" value="AT1G10960"/>
</dbReference>
<dbReference type="GeneID" id="837639"/>
<dbReference type="Gramene" id="AT1G10960.1">
    <property type="protein sequence ID" value="AT1G10960.1"/>
    <property type="gene ID" value="AT1G10960"/>
</dbReference>
<dbReference type="KEGG" id="ath:AT1G10960"/>
<dbReference type="Araport" id="AT1G10960"/>
<dbReference type="TAIR" id="AT1G10960">
    <property type="gene designation" value="FD1"/>
</dbReference>
<dbReference type="eggNOG" id="ENOG502S1GZ">
    <property type="taxonomic scope" value="Eukaryota"/>
</dbReference>
<dbReference type="HOGENOM" id="CLU_082632_1_1_1"/>
<dbReference type="InParanoid" id="O04090"/>
<dbReference type="OMA" id="CEQNIEL"/>
<dbReference type="OrthoDB" id="1885901at2759"/>
<dbReference type="PhylomeDB" id="O04090"/>
<dbReference type="PRO" id="PR:O04090"/>
<dbReference type="Proteomes" id="UP000006548">
    <property type="component" value="Chromosome 1"/>
</dbReference>
<dbReference type="ExpressionAtlas" id="O04090">
    <property type="expression patterns" value="baseline and differential"/>
</dbReference>
<dbReference type="GO" id="GO:0009507">
    <property type="term" value="C:chloroplast"/>
    <property type="evidence" value="ECO:0007005"/>
    <property type="project" value="TAIR"/>
</dbReference>
<dbReference type="GO" id="GO:0009570">
    <property type="term" value="C:chloroplast stroma"/>
    <property type="evidence" value="ECO:0007005"/>
    <property type="project" value="TAIR"/>
</dbReference>
<dbReference type="GO" id="GO:0051537">
    <property type="term" value="F:2 iron, 2 sulfur cluster binding"/>
    <property type="evidence" value="ECO:0007669"/>
    <property type="project" value="UniProtKB-KW"/>
</dbReference>
<dbReference type="GO" id="GO:0009055">
    <property type="term" value="F:electron transfer activity"/>
    <property type="evidence" value="ECO:0007669"/>
    <property type="project" value="InterPro"/>
</dbReference>
<dbReference type="GO" id="GO:0046872">
    <property type="term" value="F:metal ion binding"/>
    <property type="evidence" value="ECO:0007669"/>
    <property type="project" value="UniProtKB-KW"/>
</dbReference>
<dbReference type="GO" id="GO:0022900">
    <property type="term" value="P:electron transport chain"/>
    <property type="evidence" value="ECO:0007669"/>
    <property type="project" value="InterPro"/>
</dbReference>
<dbReference type="CDD" id="cd00207">
    <property type="entry name" value="fer2"/>
    <property type="match status" value="1"/>
</dbReference>
<dbReference type="FunFam" id="3.10.20.30:FF:000014">
    <property type="entry name" value="Ferredoxin"/>
    <property type="match status" value="1"/>
</dbReference>
<dbReference type="Gene3D" id="3.10.20.30">
    <property type="match status" value="1"/>
</dbReference>
<dbReference type="InterPro" id="IPR036010">
    <property type="entry name" value="2Fe-2S_ferredoxin-like_sf"/>
</dbReference>
<dbReference type="InterPro" id="IPR001041">
    <property type="entry name" value="2Fe-2S_ferredoxin-type"/>
</dbReference>
<dbReference type="InterPro" id="IPR006058">
    <property type="entry name" value="2Fe2S_fd_BS"/>
</dbReference>
<dbReference type="InterPro" id="IPR012675">
    <property type="entry name" value="Beta-grasp_dom_sf"/>
</dbReference>
<dbReference type="InterPro" id="IPR010241">
    <property type="entry name" value="Fd_pln"/>
</dbReference>
<dbReference type="NCBIfam" id="TIGR02008">
    <property type="entry name" value="fdx_plant"/>
    <property type="match status" value="1"/>
</dbReference>
<dbReference type="PANTHER" id="PTHR43112">
    <property type="entry name" value="FERREDOXIN"/>
    <property type="match status" value="1"/>
</dbReference>
<dbReference type="PANTHER" id="PTHR43112:SF17">
    <property type="entry name" value="FERREDOXIN-1, CHLOROPLASTIC"/>
    <property type="match status" value="1"/>
</dbReference>
<dbReference type="Pfam" id="PF00111">
    <property type="entry name" value="Fer2"/>
    <property type="match status" value="1"/>
</dbReference>
<dbReference type="SUPFAM" id="SSF54292">
    <property type="entry name" value="2Fe-2S ferredoxin-like"/>
    <property type="match status" value="1"/>
</dbReference>
<dbReference type="PROSITE" id="PS00197">
    <property type="entry name" value="2FE2S_FER_1"/>
    <property type="match status" value="1"/>
</dbReference>
<dbReference type="PROSITE" id="PS51085">
    <property type="entry name" value="2FE2S_FER_2"/>
    <property type="match status" value="1"/>
</dbReference>
<comment type="function">
    <text>Ferredoxins are iron-sulfur proteins that transfer electrons in a wide variety of metabolic reactions.</text>
</comment>
<comment type="cofactor">
    <cofactor>
        <name>[2Fe-2S] cluster</name>
        <dbReference type="ChEBI" id="CHEBI:190135"/>
    </cofactor>
    <text>Binds 1 [2Fe-2S] cluster.</text>
</comment>
<comment type="biophysicochemical properties">
    <redoxPotential>
        <text evidence="2">E(0) is -425 mV.</text>
    </redoxPotential>
</comment>
<comment type="subcellular location">
    <subcellularLocation>
        <location>Plastid</location>
        <location>Chloroplast</location>
    </subcellularLocation>
</comment>
<comment type="tissue specificity">
    <text evidence="2">Expressed in leaves. Not detected in roots.</text>
</comment>
<comment type="similarity">
    <text evidence="3">Belongs to the 2Fe2S plant-type ferredoxin family.</text>
</comment>
<comment type="sequence caution" evidence="3">
    <conflict type="erroneous termination">
        <sequence resource="EMBL-CDS" id="AAL24214"/>
    </conflict>
    <text>Truncated C-terminus.</text>
</comment>
<name>FER1_ARATH</name>
<protein>
    <recommendedName>
        <fullName>Ferredoxin-1, chloroplastic</fullName>
        <shortName>AtFd1</shortName>
    </recommendedName>
</protein>
<sequence>MASTALSSAIVSTSFLRRQQTPISLRSLPFANTQSLFGLKSSTARGGRVTAMATYKVKFITPEGEQEVECEEDVYVLDAAEEAGLDLPYSCRAGSCSSCAGKVVSGSIDQSDQSFLDDEQMSEGYVLTCVAYPTSDVVIETHKEEAIM</sequence>